<protein>
    <recommendedName>
        <fullName evidence="1">V-type ATP synthase subunit F</fullName>
    </recommendedName>
    <alternativeName>
        <fullName evidence="1">V-ATPase subunit F</fullName>
    </alternativeName>
</protein>
<dbReference type="EMBL" id="AE009951">
    <property type="protein sequence ID" value="AAL93852.1"/>
    <property type="molecule type" value="Genomic_DNA"/>
</dbReference>
<dbReference type="RefSeq" id="NP_602553.1">
    <property type="nucleotide sequence ID" value="NC_003454.1"/>
</dbReference>
<dbReference type="SMR" id="Q8RI76"/>
<dbReference type="STRING" id="190304.FN1737"/>
<dbReference type="PaxDb" id="190304-FN1737"/>
<dbReference type="EnsemblBacteria" id="AAL93852">
    <property type="protein sequence ID" value="AAL93852"/>
    <property type="gene ID" value="FN1737"/>
</dbReference>
<dbReference type="KEGG" id="fnu:FN1737"/>
<dbReference type="PATRIC" id="fig|190304.8.peg.226"/>
<dbReference type="eggNOG" id="COG1436">
    <property type="taxonomic scope" value="Bacteria"/>
</dbReference>
<dbReference type="HOGENOM" id="CLU_135754_1_0_0"/>
<dbReference type="InParanoid" id="Q8RI76"/>
<dbReference type="BioCyc" id="FNUC190304:G1FZS-236-MONOMER"/>
<dbReference type="Proteomes" id="UP000002521">
    <property type="component" value="Chromosome"/>
</dbReference>
<dbReference type="GO" id="GO:0005524">
    <property type="term" value="F:ATP binding"/>
    <property type="evidence" value="ECO:0007669"/>
    <property type="project" value="UniProtKB-UniRule"/>
</dbReference>
<dbReference type="GO" id="GO:0046933">
    <property type="term" value="F:proton-transporting ATP synthase activity, rotational mechanism"/>
    <property type="evidence" value="ECO:0007669"/>
    <property type="project" value="UniProtKB-UniRule"/>
</dbReference>
<dbReference type="GO" id="GO:0046961">
    <property type="term" value="F:proton-transporting ATPase activity, rotational mechanism"/>
    <property type="evidence" value="ECO:0007669"/>
    <property type="project" value="InterPro"/>
</dbReference>
<dbReference type="GO" id="GO:0042777">
    <property type="term" value="P:proton motive force-driven plasma membrane ATP synthesis"/>
    <property type="evidence" value="ECO:0007669"/>
    <property type="project" value="UniProtKB-UniRule"/>
</dbReference>
<dbReference type="Gene3D" id="3.40.50.10580">
    <property type="entry name" value="ATPase, V1 complex, subunit F"/>
    <property type="match status" value="1"/>
</dbReference>
<dbReference type="HAMAP" id="MF_00312">
    <property type="entry name" value="ATP_synth_F_arch"/>
    <property type="match status" value="1"/>
</dbReference>
<dbReference type="InterPro" id="IPR008218">
    <property type="entry name" value="ATPase_V1-cplx_f_g_su"/>
</dbReference>
<dbReference type="InterPro" id="IPR022944">
    <property type="entry name" value="ATPase_V1-cplx_fsu_bac/arc"/>
</dbReference>
<dbReference type="InterPro" id="IPR036906">
    <property type="entry name" value="ATPase_V1_fsu_sf"/>
</dbReference>
<dbReference type="NCBIfam" id="NF002384">
    <property type="entry name" value="PRK01395.1"/>
    <property type="match status" value="1"/>
</dbReference>
<dbReference type="Pfam" id="PF01990">
    <property type="entry name" value="ATP-synt_F"/>
    <property type="match status" value="1"/>
</dbReference>
<dbReference type="SUPFAM" id="SSF159468">
    <property type="entry name" value="AtpF-like"/>
    <property type="match status" value="1"/>
</dbReference>
<keyword id="KW-0066">ATP synthesis</keyword>
<keyword id="KW-0375">Hydrogen ion transport</keyword>
<keyword id="KW-0406">Ion transport</keyword>
<keyword id="KW-1185">Reference proteome</keyword>
<keyword id="KW-0813">Transport</keyword>
<accession>Q8RI76</accession>
<sequence length="105" mass="11650">MKLMYKIAVIGDKDSVLAFKILGVDVFITLDAQEARKTIDRIAKENYGIIFVTEQLAKDIPETIKRYNSEIIPAVILIPSNKGSLNIGLTNIDKNVEKAIGSKIM</sequence>
<organism>
    <name type="scientific">Fusobacterium nucleatum subsp. nucleatum (strain ATCC 25586 / DSM 15643 / BCRC 10681 / CIP 101130 / JCM 8532 / KCTC 2640 / LMG 13131 / VPI 4355)</name>
    <dbReference type="NCBI Taxonomy" id="190304"/>
    <lineage>
        <taxon>Bacteria</taxon>
        <taxon>Fusobacteriati</taxon>
        <taxon>Fusobacteriota</taxon>
        <taxon>Fusobacteriia</taxon>
        <taxon>Fusobacteriales</taxon>
        <taxon>Fusobacteriaceae</taxon>
        <taxon>Fusobacterium</taxon>
    </lineage>
</organism>
<feature type="chain" id="PRO_0000144828" description="V-type ATP synthase subunit F">
    <location>
        <begin position="1"/>
        <end position="105"/>
    </location>
</feature>
<reference key="1">
    <citation type="journal article" date="2002" name="J. Bacteriol.">
        <title>Genome sequence and analysis of the oral bacterium Fusobacterium nucleatum strain ATCC 25586.</title>
        <authorList>
            <person name="Kapatral V."/>
            <person name="Anderson I."/>
            <person name="Ivanova N."/>
            <person name="Reznik G."/>
            <person name="Los T."/>
            <person name="Lykidis A."/>
            <person name="Bhattacharyya A."/>
            <person name="Bartman A."/>
            <person name="Gardner W."/>
            <person name="Grechkin G."/>
            <person name="Zhu L."/>
            <person name="Vasieva O."/>
            <person name="Chu L."/>
            <person name="Kogan Y."/>
            <person name="Chaga O."/>
            <person name="Goltsman E."/>
            <person name="Bernal A."/>
            <person name="Larsen N."/>
            <person name="D'Souza M."/>
            <person name="Walunas T."/>
            <person name="Pusch G."/>
            <person name="Haselkorn R."/>
            <person name="Fonstein M."/>
            <person name="Kyrpides N.C."/>
            <person name="Overbeek R."/>
        </authorList>
    </citation>
    <scope>NUCLEOTIDE SEQUENCE [LARGE SCALE GENOMIC DNA]</scope>
    <source>
        <strain>ATCC 25586 / DSM 15643 / BCRC 10681 / CIP 101130 / JCM 8532 / KCTC 2640 / LMG 13131 / VPI 4355</strain>
    </source>
</reference>
<gene>
    <name evidence="1" type="primary">atpF</name>
    <name type="ordered locus">FN1737</name>
</gene>
<comment type="function">
    <text evidence="1">Produces ATP from ADP in the presence of a proton gradient across the membrane.</text>
</comment>
<comment type="similarity">
    <text evidence="1">Belongs to the V-ATPase F subunit family.</text>
</comment>
<proteinExistence type="inferred from homology"/>
<evidence type="ECO:0000255" key="1">
    <source>
        <dbReference type="HAMAP-Rule" id="MF_00312"/>
    </source>
</evidence>
<name>VATF_FUSNN</name>